<protein>
    <recommendedName>
        <fullName evidence="1">5'-nucleotidase SurE</fullName>
        <ecNumber evidence="1">3.1.3.5</ecNumber>
    </recommendedName>
    <alternativeName>
        <fullName evidence="1">Nucleoside 5'-monophosphate phosphohydrolase</fullName>
    </alternativeName>
</protein>
<gene>
    <name evidence="1" type="primary">surE</name>
    <name type="ordered locus">XOO2808</name>
</gene>
<sequence>MRVLVSNDDGVDAPGIQILAEALRHGGHEVMVVAPDRDRSGASNSLTLDVPIRTRRIDAQTCAVAGTPTDCVHLALTGMLDCDPDIVVSGINNSANLGDDVIYSGTVSAAMEGRFLGLPAVAVSLVTHNHQAHHYDTAARAAVEIVARLKADPLPADTILNVNVPDLAWSDVLGFEVTRLGNRHRSEPCVPQRDPRGRTVYWIGPAGPEQDAGAGTDFHAVRTGHISITPIHVDLTRYQALETVAGWVGGLTAALDGPA</sequence>
<proteinExistence type="inferred from homology"/>
<dbReference type="EC" id="3.1.3.5" evidence="1"/>
<dbReference type="EMBL" id="AP008229">
    <property type="protein sequence ID" value="BAE69563.1"/>
    <property type="molecule type" value="Genomic_DNA"/>
</dbReference>
<dbReference type="RefSeq" id="WP_011408892.1">
    <property type="nucleotide sequence ID" value="NC_007705.1"/>
</dbReference>
<dbReference type="SMR" id="Q2P1L4"/>
<dbReference type="KEGG" id="xom:XOO2808"/>
<dbReference type="HOGENOM" id="CLU_045192_1_2_6"/>
<dbReference type="GO" id="GO:0005737">
    <property type="term" value="C:cytoplasm"/>
    <property type="evidence" value="ECO:0007669"/>
    <property type="project" value="UniProtKB-SubCell"/>
</dbReference>
<dbReference type="GO" id="GO:0008254">
    <property type="term" value="F:3'-nucleotidase activity"/>
    <property type="evidence" value="ECO:0007669"/>
    <property type="project" value="TreeGrafter"/>
</dbReference>
<dbReference type="GO" id="GO:0008253">
    <property type="term" value="F:5'-nucleotidase activity"/>
    <property type="evidence" value="ECO:0007669"/>
    <property type="project" value="UniProtKB-UniRule"/>
</dbReference>
<dbReference type="GO" id="GO:0004309">
    <property type="term" value="F:exopolyphosphatase activity"/>
    <property type="evidence" value="ECO:0007669"/>
    <property type="project" value="TreeGrafter"/>
</dbReference>
<dbReference type="GO" id="GO:0046872">
    <property type="term" value="F:metal ion binding"/>
    <property type="evidence" value="ECO:0007669"/>
    <property type="project" value="UniProtKB-UniRule"/>
</dbReference>
<dbReference type="GO" id="GO:0000166">
    <property type="term" value="F:nucleotide binding"/>
    <property type="evidence" value="ECO:0007669"/>
    <property type="project" value="UniProtKB-KW"/>
</dbReference>
<dbReference type="FunFam" id="3.40.1210.10:FF:000001">
    <property type="entry name" value="5'/3'-nucleotidase SurE"/>
    <property type="match status" value="1"/>
</dbReference>
<dbReference type="Gene3D" id="3.40.1210.10">
    <property type="entry name" value="Survival protein SurE-like phosphatase/nucleotidase"/>
    <property type="match status" value="1"/>
</dbReference>
<dbReference type="HAMAP" id="MF_00060">
    <property type="entry name" value="SurE"/>
    <property type="match status" value="1"/>
</dbReference>
<dbReference type="InterPro" id="IPR030048">
    <property type="entry name" value="SurE"/>
</dbReference>
<dbReference type="InterPro" id="IPR002828">
    <property type="entry name" value="SurE-like_Pase/nucleotidase"/>
</dbReference>
<dbReference type="InterPro" id="IPR036523">
    <property type="entry name" value="SurE-like_sf"/>
</dbReference>
<dbReference type="NCBIfam" id="NF001489">
    <property type="entry name" value="PRK00346.1-3"/>
    <property type="match status" value="1"/>
</dbReference>
<dbReference type="NCBIfam" id="NF001490">
    <property type="entry name" value="PRK00346.1-4"/>
    <property type="match status" value="1"/>
</dbReference>
<dbReference type="NCBIfam" id="TIGR00087">
    <property type="entry name" value="surE"/>
    <property type="match status" value="1"/>
</dbReference>
<dbReference type="PANTHER" id="PTHR30457">
    <property type="entry name" value="5'-NUCLEOTIDASE SURE"/>
    <property type="match status" value="1"/>
</dbReference>
<dbReference type="PANTHER" id="PTHR30457:SF12">
    <property type="entry name" value="5'_3'-NUCLEOTIDASE SURE"/>
    <property type="match status" value="1"/>
</dbReference>
<dbReference type="Pfam" id="PF01975">
    <property type="entry name" value="SurE"/>
    <property type="match status" value="1"/>
</dbReference>
<dbReference type="SUPFAM" id="SSF64167">
    <property type="entry name" value="SurE-like"/>
    <property type="match status" value="1"/>
</dbReference>
<feature type="chain" id="PRO_0000235672" description="5'-nucleotidase SurE">
    <location>
        <begin position="1"/>
        <end position="259"/>
    </location>
</feature>
<feature type="binding site" evidence="1">
    <location>
        <position position="8"/>
    </location>
    <ligand>
        <name>a divalent metal cation</name>
        <dbReference type="ChEBI" id="CHEBI:60240"/>
    </ligand>
</feature>
<feature type="binding site" evidence="1">
    <location>
        <position position="9"/>
    </location>
    <ligand>
        <name>a divalent metal cation</name>
        <dbReference type="ChEBI" id="CHEBI:60240"/>
    </ligand>
</feature>
<feature type="binding site" evidence="1">
    <location>
        <position position="40"/>
    </location>
    <ligand>
        <name>a divalent metal cation</name>
        <dbReference type="ChEBI" id="CHEBI:60240"/>
    </ligand>
</feature>
<feature type="binding site" evidence="1">
    <location>
        <position position="92"/>
    </location>
    <ligand>
        <name>a divalent metal cation</name>
        <dbReference type="ChEBI" id="CHEBI:60240"/>
    </ligand>
</feature>
<accession>Q2P1L4</accession>
<reference key="1">
    <citation type="journal article" date="2005" name="Jpn. Agric. Res. Q.">
        <title>Genome sequence of Xanthomonas oryzae pv. oryzae suggests contribution of large numbers of effector genes and insertion sequences to its race diversity.</title>
        <authorList>
            <person name="Ochiai H."/>
            <person name="Inoue Y."/>
            <person name="Takeya M."/>
            <person name="Sasaki A."/>
            <person name="Kaku H."/>
        </authorList>
    </citation>
    <scope>NUCLEOTIDE SEQUENCE [LARGE SCALE GENOMIC DNA]</scope>
    <source>
        <strain>MAFF 311018</strain>
    </source>
</reference>
<name>SURE_XANOM</name>
<organism>
    <name type="scientific">Xanthomonas oryzae pv. oryzae (strain MAFF 311018)</name>
    <dbReference type="NCBI Taxonomy" id="342109"/>
    <lineage>
        <taxon>Bacteria</taxon>
        <taxon>Pseudomonadati</taxon>
        <taxon>Pseudomonadota</taxon>
        <taxon>Gammaproteobacteria</taxon>
        <taxon>Lysobacterales</taxon>
        <taxon>Lysobacteraceae</taxon>
        <taxon>Xanthomonas</taxon>
    </lineage>
</organism>
<evidence type="ECO:0000255" key="1">
    <source>
        <dbReference type="HAMAP-Rule" id="MF_00060"/>
    </source>
</evidence>
<keyword id="KW-0963">Cytoplasm</keyword>
<keyword id="KW-0378">Hydrolase</keyword>
<keyword id="KW-0479">Metal-binding</keyword>
<keyword id="KW-0547">Nucleotide-binding</keyword>
<comment type="function">
    <text evidence="1">Nucleotidase that shows phosphatase activity on nucleoside 5'-monophosphates.</text>
</comment>
<comment type="catalytic activity">
    <reaction evidence="1">
        <text>a ribonucleoside 5'-phosphate + H2O = a ribonucleoside + phosphate</text>
        <dbReference type="Rhea" id="RHEA:12484"/>
        <dbReference type="ChEBI" id="CHEBI:15377"/>
        <dbReference type="ChEBI" id="CHEBI:18254"/>
        <dbReference type="ChEBI" id="CHEBI:43474"/>
        <dbReference type="ChEBI" id="CHEBI:58043"/>
        <dbReference type="EC" id="3.1.3.5"/>
    </reaction>
</comment>
<comment type="cofactor">
    <cofactor evidence="1">
        <name>a divalent metal cation</name>
        <dbReference type="ChEBI" id="CHEBI:60240"/>
    </cofactor>
    <text evidence="1">Binds 1 divalent metal cation per subunit.</text>
</comment>
<comment type="subcellular location">
    <subcellularLocation>
        <location evidence="1">Cytoplasm</location>
    </subcellularLocation>
</comment>
<comment type="similarity">
    <text evidence="1">Belongs to the SurE nucleotidase family.</text>
</comment>